<accession>A1S7K8</accession>
<protein>
    <recommendedName>
        <fullName evidence="1">Chorismate synthase</fullName>
        <shortName evidence="1">CS</shortName>
        <ecNumber evidence="1">4.2.3.5</ecNumber>
    </recommendedName>
    <alternativeName>
        <fullName evidence="1">5-enolpyruvylshikimate-3-phosphate phospholyase</fullName>
    </alternativeName>
</protein>
<comment type="function">
    <text evidence="1">Catalyzes the anti-1,4-elimination of the C-3 phosphate and the C-6 proR hydrogen from 5-enolpyruvylshikimate-3-phosphate (EPSP) to yield chorismate, which is the branch point compound that serves as the starting substrate for the three terminal pathways of aromatic amino acid biosynthesis. This reaction introduces a second double bond into the aromatic ring system.</text>
</comment>
<comment type="catalytic activity">
    <reaction evidence="1">
        <text>5-O-(1-carboxyvinyl)-3-phosphoshikimate = chorismate + phosphate</text>
        <dbReference type="Rhea" id="RHEA:21020"/>
        <dbReference type="ChEBI" id="CHEBI:29748"/>
        <dbReference type="ChEBI" id="CHEBI:43474"/>
        <dbReference type="ChEBI" id="CHEBI:57701"/>
        <dbReference type="EC" id="4.2.3.5"/>
    </reaction>
</comment>
<comment type="cofactor">
    <cofactor evidence="1">
        <name>FMNH2</name>
        <dbReference type="ChEBI" id="CHEBI:57618"/>
    </cofactor>
    <text evidence="1">Reduced FMN (FMNH(2)).</text>
</comment>
<comment type="pathway">
    <text evidence="1">Metabolic intermediate biosynthesis; chorismate biosynthesis; chorismate from D-erythrose 4-phosphate and phosphoenolpyruvate: step 7/7.</text>
</comment>
<comment type="subunit">
    <text evidence="1">Homotetramer.</text>
</comment>
<comment type="similarity">
    <text evidence="1">Belongs to the chorismate synthase family.</text>
</comment>
<dbReference type="EC" id="4.2.3.5" evidence="1"/>
<dbReference type="EMBL" id="CP000507">
    <property type="protein sequence ID" value="ABM00365.1"/>
    <property type="molecule type" value="Genomic_DNA"/>
</dbReference>
<dbReference type="RefSeq" id="WP_011760272.1">
    <property type="nucleotide sequence ID" value="NC_008700.1"/>
</dbReference>
<dbReference type="SMR" id="A1S7K8"/>
<dbReference type="STRING" id="326297.Sama_2159"/>
<dbReference type="KEGG" id="saz:Sama_2159"/>
<dbReference type="eggNOG" id="COG0082">
    <property type="taxonomic scope" value="Bacteria"/>
</dbReference>
<dbReference type="HOGENOM" id="CLU_034547_0_2_6"/>
<dbReference type="OrthoDB" id="9771806at2"/>
<dbReference type="UniPathway" id="UPA00053">
    <property type="reaction ID" value="UER00090"/>
</dbReference>
<dbReference type="Proteomes" id="UP000009175">
    <property type="component" value="Chromosome"/>
</dbReference>
<dbReference type="GO" id="GO:0005829">
    <property type="term" value="C:cytosol"/>
    <property type="evidence" value="ECO:0007669"/>
    <property type="project" value="TreeGrafter"/>
</dbReference>
<dbReference type="GO" id="GO:0004107">
    <property type="term" value="F:chorismate synthase activity"/>
    <property type="evidence" value="ECO:0007669"/>
    <property type="project" value="UniProtKB-UniRule"/>
</dbReference>
<dbReference type="GO" id="GO:0010181">
    <property type="term" value="F:FMN binding"/>
    <property type="evidence" value="ECO:0007669"/>
    <property type="project" value="TreeGrafter"/>
</dbReference>
<dbReference type="GO" id="GO:0008652">
    <property type="term" value="P:amino acid biosynthetic process"/>
    <property type="evidence" value="ECO:0007669"/>
    <property type="project" value="UniProtKB-KW"/>
</dbReference>
<dbReference type="GO" id="GO:0009073">
    <property type="term" value="P:aromatic amino acid family biosynthetic process"/>
    <property type="evidence" value="ECO:0007669"/>
    <property type="project" value="UniProtKB-KW"/>
</dbReference>
<dbReference type="GO" id="GO:0009423">
    <property type="term" value="P:chorismate biosynthetic process"/>
    <property type="evidence" value="ECO:0007669"/>
    <property type="project" value="UniProtKB-UniRule"/>
</dbReference>
<dbReference type="CDD" id="cd07304">
    <property type="entry name" value="Chorismate_synthase"/>
    <property type="match status" value="1"/>
</dbReference>
<dbReference type="FunFam" id="3.60.150.10:FF:000001">
    <property type="entry name" value="Chorismate synthase"/>
    <property type="match status" value="1"/>
</dbReference>
<dbReference type="Gene3D" id="3.60.150.10">
    <property type="entry name" value="Chorismate synthase AroC"/>
    <property type="match status" value="1"/>
</dbReference>
<dbReference type="HAMAP" id="MF_00300">
    <property type="entry name" value="Chorismate_synth"/>
    <property type="match status" value="1"/>
</dbReference>
<dbReference type="InterPro" id="IPR000453">
    <property type="entry name" value="Chorismate_synth"/>
</dbReference>
<dbReference type="InterPro" id="IPR035904">
    <property type="entry name" value="Chorismate_synth_AroC_sf"/>
</dbReference>
<dbReference type="InterPro" id="IPR020541">
    <property type="entry name" value="Chorismate_synthase_CS"/>
</dbReference>
<dbReference type="NCBIfam" id="TIGR00033">
    <property type="entry name" value="aroC"/>
    <property type="match status" value="1"/>
</dbReference>
<dbReference type="NCBIfam" id="NF003793">
    <property type="entry name" value="PRK05382.1"/>
    <property type="match status" value="1"/>
</dbReference>
<dbReference type="PANTHER" id="PTHR21085">
    <property type="entry name" value="CHORISMATE SYNTHASE"/>
    <property type="match status" value="1"/>
</dbReference>
<dbReference type="PANTHER" id="PTHR21085:SF0">
    <property type="entry name" value="CHORISMATE SYNTHASE"/>
    <property type="match status" value="1"/>
</dbReference>
<dbReference type="Pfam" id="PF01264">
    <property type="entry name" value="Chorismate_synt"/>
    <property type="match status" value="1"/>
</dbReference>
<dbReference type="PIRSF" id="PIRSF001456">
    <property type="entry name" value="Chorismate_synth"/>
    <property type="match status" value="1"/>
</dbReference>
<dbReference type="SUPFAM" id="SSF103263">
    <property type="entry name" value="Chorismate synthase, AroC"/>
    <property type="match status" value="1"/>
</dbReference>
<dbReference type="PROSITE" id="PS00787">
    <property type="entry name" value="CHORISMATE_SYNTHASE_1"/>
    <property type="match status" value="1"/>
</dbReference>
<dbReference type="PROSITE" id="PS00788">
    <property type="entry name" value="CHORISMATE_SYNTHASE_2"/>
    <property type="match status" value="1"/>
</dbReference>
<dbReference type="PROSITE" id="PS00789">
    <property type="entry name" value="CHORISMATE_SYNTHASE_3"/>
    <property type="match status" value="1"/>
</dbReference>
<sequence>MSGNSIGQNFVVTTFGESHGVALGCIIDGCPPGLELTEADMQHDLDRRRPGTSRYTTARREPDEVRILSGVFEGKTTGTSIGLIIENTDQRSQDYSNIKDLFRPGHADYTYQQKYGLRDYRGGGRSSARETAMRVAAGAVAKKYLKAVHGIEIYGFLSQLGPIEAEHIDREQIEQNAFFFPDASKLEALDEYMRELKKSGDSIGAKVSVIATNVPVGLGEPVFDRLDADIAHALMGINAVKGVEIGDGFAVVTQKGSEHRDLMSPEGFASNHAGGVLGGISSGQPIVAHMALKPTSSISIPGESMTVQGNTAEVVTKGRHDPCVGIRAVPIAEAMLAIVLMDHLLRHRAQNQHVHSETPVLGMRS</sequence>
<gene>
    <name evidence="1" type="primary">aroC</name>
    <name type="ordered locus">Sama_2159</name>
</gene>
<evidence type="ECO:0000255" key="1">
    <source>
        <dbReference type="HAMAP-Rule" id="MF_00300"/>
    </source>
</evidence>
<evidence type="ECO:0000256" key="2">
    <source>
        <dbReference type="SAM" id="MobiDB-lite"/>
    </source>
</evidence>
<organism>
    <name type="scientific">Shewanella amazonensis (strain ATCC BAA-1098 / SB2B)</name>
    <dbReference type="NCBI Taxonomy" id="326297"/>
    <lineage>
        <taxon>Bacteria</taxon>
        <taxon>Pseudomonadati</taxon>
        <taxon>Pseudomonadota</taxon>
        <taxon>Gammaproteobacteria</taxon>
        <taxon>Alteromonadales</taxon>
        <taxon>Shewanellaceae</taxon>
        <taxon>Shewanella</taxon>
    </lineage>
</organism>
<name>AROC_SHEAM</name>
<proteinExistence type="inferred from homology"/>
<reference key="1">
    <citation type="submission" date="2006-12" db="EMBL/GenBank/DDBJ databases">
        <title>Complete sequence of Shewanella amazonensis SB2B.</title>
        <authorList>
            <consortium name="US DOE Joint Genome Institute"/>
            <person name="Copeland A."/>
            <person name="Lucas S."/>
            <person name="Lapidus A."/>
            <person name="Barry K."/>
            <person name="Detter J.C."/>
            <person name="Glavina del Rio T."/>
            <person name="Hammon N."/>
            <person name="Israni S."/>
            <person name="Dalin E."/>
            <person name="Tice H."/>
            <person name="Pitluck S."/>
            <person name="Munk A.C."/>
            <person name="Brettin T."/>
            <person name="Bruce D."/>
            <person name="Han C."/>
            <person name="Tapia R."/>
            <person name="Gilna P."/>
            <person name="Schmutz J."/>
            <person name="Larimer F."/>
            <person name="Land M."/>
            <person name="Hauser L."/>
            <person name="Kyrpides N."/>
            <person name="Mikhailova N."/>
            <person name="Fredrickson J."/>
            <person name="Richardson P."/>
        </authorList>
    </citation>
    <scope>NUCLEOTIDE SEQUENCE [LARGE SCALE GENOMIC DNA]</scope>
    <source>
        <strain>ATCC BAA-1098 / SB2B</strain>
    </source>
</reference>
<feature type="chain" id="PRO_1000022544" description="Chorismate synthase">
    <location>
        <begin position="1"/>
        <end position="365"/>
    </location>
</feature>
<feature type="region of interest" description="Disordered" evidence="2">
    <location>
        <begin position="41"/>
        <end position="60"/>
    </location>
</feature>
<feature type="binding site" evidence="1">
    <location>
        <position position="48"/>
    </location>
    <ligand>
        <name>NADP(+)</name>
        <dbReference type="ChEBI" id="CHEBI:58349"/>
    </ligand>
</feature>
<feature type="binding site" evidence="1">
    <location>
        <position position="54"/>
    </location>
    <ligand>
        <name>NADP(+)</name>
        <dbReference type="ChEBI" id="CHEBI:58349"/>
    </ligand>
</feature>
<feature type="binding site" evidence="1">
    <location>
        <begin position="125"/>
        <end position="127"/>
    </location>
    <ligand>
        <name>FMN</name>
        <dbReference type="ChEBI" id="CHEBI:58210"/>
    </ligand>
</feature>
<feature type="binding site" evidence="1">
    <location>
        <begin position="238"/>
        <end position="239"/>
    </location>
    <ligand>
        <name>FMN</name>
        <dbReference type="ChEBI" id="CHEBI:58210"/>
    </ligand>
</feature>
<feature type="binding site" evidence="1">
    <location>
        <position position="278"/>
    </location>
    <ligand>
        <name>FMN</name>
        <dbReference type="ChEBI" id="CHEBI:58210"/>
    </ligand>
</feature>
<feature type="binding site" evidence="1">
    <location>
        <begin position="293"/>
        <end position="297"/>
    </location>
    <ligand>
        <name>FMN</name>
        <dbReference type="ChEBI" id="CHEBI:58210"/>
    </ligand>
</feature>
<feature type="binding site" evidence="1">
    <location>
        <position position="319"/>
    </location>
    <ligand>
        <name>FMN</name>
        <dbReference type="ChEBI" id="CHEBI:58210"/>
    </ligand>
</feature>
<keyword id="KW-0028">Amino-acid biosynthesis</keyword>
<keyword id="KW-0057">Aromatic amino acid biosynthesis</keyword>
<keyword id="KW-0274">FAD</keyword>
<keyword id="KW-0285">Flavoprotein</keyword>
<keyword id="KW-0288">FMN</keyword>
<keyword id="KW-0456">Lyase</keyword>
<keyword id="KW-0521">NADP</keyword>
<keyword id="KW-1185">Reference proteome</keyword>